<feature type="chain" id="PRO_0000141464" description="4-hydroxy-tetrahydrodipicolinate reductase">
    <location>
        <begin position="1"/>
        <end position="273"/>
    </location>
</feature>
<feature type="active site" description="Proton donor/acceptor" evidence="1">
    <location>
        <position position="159"/>
    </location>
</feature>
<feature type="active site" description="Proton donor" evidence="1">
    <location>
        <position position="163"/>
    </location>
</feature>
<feature type="binding site" evidence="1">
    <location>
        <begin position="12"/>
        <end position="17"/>
    </location>
    <ligand>
        <name>NAD(+)</name>
        <dbReference type="ChEBI" id="CHEBI:57540"/>
    </ligand>
</feature>
<feature type="binding site" evidence="1">
    <location>
        <position position="38"/>
    </location>
    <ligand>
        <name>NAD(+)</name>
        <dbReference type="ChEBI" id="CHEBI:57540"/>
    </ligand>
</feature>
<feature type="binding site" evidence="1">
    <location>
        <position position="39"/>
    </location>
    <ligand>
        <name>NADP(+)</name>
        <dbReference type="ChEBI" id="CHEBI:58349"/>
    </ligand>
</feature>
<feature type="binding site" evidence="1">
    <location>
        <begin position="102"/>
        <end position="104"/>
    </location>
    <ligand>
        <name>NAD(+)</name>
        <dbReference type="ChEBI" id="CHEBI:57540"/>
    </ligand>
</feature>
<feature type="binding site" evidence="1">
    <location>
        <begin position="126"/>
        <end position="129"/>
    </location>
    <ligand>
        <name>NAD(+)</name>
        <dbReference type="ChEBI" id="CHEBI:57540"/>
    </ligand>
</feature>
<feature type="binding site" evidence="1">
    <location>
        <position position="160"/>
    </location>
    <ligand>
        <name>(S)-2,3,4,5-tetrahydrodipicolinate</name>
        <dbReference type="ChEBI" id="CHEBI:16845"/>
    </ligand>
</feature>
<feature type="binding site" evidence="1">
    <location>
        <begin position="169"/>
        <end position="170"/>
    </location>
    <ligand>
        <name>(S)-2,3,4,5-tetrahydrodipicolinate</name>
        <dbReference type="ChEBI" id="CHEBI:16845"/>
    </ligand>
</feature>
<sequence length="273" mass="28762">MADTDIRVAIVGAGGRMGRQLIQAIYQLDGVALGAALERSGSSLIGADAGELAGIGHNGVTVCDDLTSIVDDFDILIDFTRPEGTLTHLEICRQNGKAIVIGTTGFDEAGKQAIKQASADIPIVFAANFSVGVNLVLKLLEKAAKVMGEYSDIEIIEAHHRHKVDAPSGTALAMGESIAHALGRDLKACAVYAREGYTGERDPKSIGFATIRAGDIVGEHTAMFADIGERVEITHKASSRMTFANGAVKAALWLSGKNSGLFDMKDVLNLDLL</sequence>
<organism>
    <name type="scientific">Photorhabdus laumondii subsp. laumondii (strain DSM 15139 / CIP 105565 / TT01)</name>
    <name type="common">Photorhabdus luminescens subsp. laumondii</name>
    <dbReference type="NCBI Taxonomy" id="243265"/>
    <lineage>
        <taxon>Bacteria</taxon>
        <taxon>Pseudomonadati</taxon>
        <taxon>Pseudomonadota</taxon>
        <taxon>Gammaproteobacteria</taxon>
        <taxon>Enterobacterales</taxon>
        <taxon>Morganellaceae</taxon>
        <taxon>Photorhabdus</taxon>
    </lineage>
</organism>
<keyword id="KW-0028">Amino-acid biosynthesis</keyword>
<keyword id="KW-0963">Cytoplasm</keyword>
<keyword id="KW-0220">Diaminopimelate biosynthesis</keyword>
<keyword id="KW-0457">Lysine biosynthesis</keyword>
<keyword id="KW-0520">NAD</keyword>
<keyword id="KW-0521">NADP</keyword>
<keyword id="KW-0560">Oxidoreductase</keyword>
<keyword id="KW-1185">Reference proteome</keyword>
<comment type="function">
    <text evidence="1">Catalyzes the conversion of 4-hydroxy-tetrahydrodipicolinate (HTPA) to tetrahydrodipicolinate.</text>
</comment>
<comment type="catalytic activity">
    <reaction evidence="1">
        <text>(S)-2,3,4,5-tetrahydrodipicolinate + NAD(+) + H2O = (2S,4S)-4-hydroxy-2,3,4,5-tetrahydrodipicolinate + NADH + H(+)</text>
        <dbReference type="Rhea" id="RHEA:35323"/>
        <dbReference type="ChEBI" id="CHEBI:15377"/>
        <dbReference type="ChEBI" id="CHEBI:15378"/>
        <dbReference type="ChEBI" id="CHEBI:16845"/>
        <dbReference type="ChEBI" id="CHEBI:57540"/>
        <dbReference type="ChEBI" id="CHEBI:57945"/>
        <dbReference type="ChEBI" id="CHEBI:67139"/>
        <dbReference type="EC" id="1.17.1.8"/>
    </reaction>
</comment>
<comment type="catalytic activity">
    <reaction evidence="1">
        <text>(S)-2,3,4,5-tetrahydrodipicolinate + NADP(+) + H2O = (2S,4S)-4-hydroxy-2,3,4,5-tetrahydrodipicolinate + NADPH + H(+)</text>
        <dbReference type="Rhea" id="RHEA:35331"/>
        <dbReference type="ChEBI" id="CHEBI:15377"/>
        <dbReference type="ChEBI" id="CHEBI:15378"/>
        <dbReference type="ChEBI" id="CHEBI:16845"/>
        <dbReference type="ChEBI" id="CHEBI:57783"/>
        <dbReference type="ChEBI" id="CHEBI:58349"/>
        <dbReference type="ChEBI" id="CHEBI:67139"/>
        <dbReference type="EC" id="1.17.1.8"/>
    </reaction>
</comment>
<comment type="pathway">
    <text evidence="1">Amino-acid biosynthesis; L-lysine biosynthesis via DAP pathway; (S)-tetrahydrodipicolinate from L-aspartate: step 4/4.</text>
</comment>
<comment type="subunit">
    <text evidence="1">Homotetramer.</text>
</comment>
<comment type="subcellular location">
    <subcellularLocation>
        <location evidence="1">Cytoplasm</location>
    </subcellularLocation>
</comment>
<comment type="similarity">
    <text evidence="1">Belongs to the DapB family.</text>
</comment>
<comment type="caution">
    <text evidence="2">Was originally thought to be a dihydrodipicolinate reductase (DHDPR), catalyzing the conversion of dihydrodipicolinate to tetrahydrodipicolinate. However, it was shown in E.coli that the substrate of the enzymatic reaction is not dihydrodipicolinate (DHDP) but in fact (2S,4S)-4-hydroxy-2,3,4,5-tetrahydrodipicolinic acid (HTPA), the product released by the DapA-catalyzed reaction.</text>
</comment>
<proteinExistence type="inferred from homology"/>
<protein>
    <recommendedName>
        <fullName evidence="1">4-hydroxy-tetrahydrodipicolinate reductase</fullName>
        <shortName evidence="1">HTPA reductase</shortName>
        <ecNumber evidence="1">1.17.1.8</ecNumber>
    </recommendedName>
</protein>
<name>DAPB_PHOLL</name>
<dbReference type="EC" id="1.17.1.8" evidence="1"/>
<dbReference type="EMBL" id="BX571860">
    <property type="protein sequence ID" value="CAE12897.1"/>
    <property type="molecule type" value="Genomic_DNA"/>
</dbReference>
<dbReference type="RefSeq" id="WP_011144979.1">
    <property type="nucleotide sequence ID" value="NC_005126.1"/>
</dbReference>
<dbReference type="SMR" id="Q7N8W3"/>
<dbReference type="STRING" id="243265.plu0602"/>
<dbReference type="GeneID" id="48846889"/>
<dbReference type="KEGG" id="plu:plu0602"/>
<dbReference type="eggNOG" id="COG0289">
    <property type="taxonomic scope" value="Bacteria"/>
</dbReference>
<dbReference type="HOGENOM" id="CLU_047479_2_1_6"/>
<dbReference type="OrthoDB" id="9790352at2"/>
<dbReference type="UniPathway" id="UPA00034">
    <property type="reaction ID" value="UER00018"/>
</dbReference>
<dbReference type="Proteomes" id="UP000002514">
    <property type="component" value="Chromosome"/>
</dbReference>
<dbReference type="GO" id="GO:0005829">
    <property type="term" value="C:cytosol"/>
    <property type="evidence" value="ECO:0007669"/>
    <property type="project" value="TreeGrafter"/>
</dbReference>
<dbReference type="GO" id="GO:0008839">
    <property type="term" value="F:4-hydroxy-tetrahydrodipicolinate reductase"/>
    <property type="evidence" value="ECO:0007669"/>
    <property type="project" value="UniProtKB-EC"/>
</dbReference>
<dbReference type="GO" id="GO:0051287">
    <property type="term" value="F:NAD binding"/>
    <property type="evidence" value="ECO:0007669"/>
    <property type="project" value="UniProtKB-UniRule"/>
</dbReference>
<dbReference type="GO" id="GO:0050661">
    <property type="term" value="F:NADP binding"/>
    <property type="evidence" value="ECO:0007669"/>
    <property type="project" value="UniProtKB-UniRule"/>
</dbReference>
<dbReference type="GO" id="GO:0016726">
    <property type="term" value="F:oxidoreductase activity, acting on CH or CH2 groups, NAD or NADP as acceptor"/>
    <property type="evidence" value="ECO:0007669"/>
    <property type="project" value="UniProtKB-UniRule"/>
</dbReference>
<dbReference type="GO" id="GO:0019877">
    <property type="term" value="P:diaminopimelate biosynthetic process"/>
    <property type="evidence" value="ECO:0007669"/>
    <property type="project" value="UniProtKB-UniRule"/>
</dbReference>
<dbReference type="GO" id="GO:0009089">
    <property type="term" value="P:lysine biosynthetic process via diaminopimelate"/>
    <property type="evidence" value="ECO:0007669"/>
    <property type="project" value="UniProtKB-UniRule"/>
</dbReference>
<dbReference type="CDD" id="cd02274">
    <property type="entry name" value="DHDPR_N"/>
    <property type="match status" value="1"/>
</dbReference>
<dbReference type="FunFam" id="3.30.360.10:FF:000004">
    <property type="entry name" value="4-hydroxy-tetrahydrodipicolinate reductase"/>
    <property type="match status" value="1"/>
</dbReference>
<dbReference type="FunFam" id="3.40.50.720:FF:000048">
    <property type="entry name" value="4-hydroxy-tetrahydrodipicolinate reductase"/>
    <property type="match status" value="1"/>
</dbReference>
<dbReference type="Gene3D" id="3.30.360.10">
    <property type="entry name" value="Dihydrodipicolinate Reductase, domain 2"/>
    <property type="match status" value="1"/>
</dbReference>
<dbReference type="Gene3D" id="3.40.50.720">
    <property type="entry name" value="NAD(P)-binding Rossmann-like Domain"/>
    <property type="match status" value="1"/>
</dbReference>
<dbReference type="HAMAP" id="MF_00102">
    <property type="entry name" value="DapB"/>
    <property type="match status" value="1"/>
</dbReference>
<dbReference type="InterPro" id="IPR022663">
    <property type="entry name" value="DapB_C"/>
</dbReference>
<dbReference type="InterPro" id="IPR000846">
    <property type="entry name" value="DapB_N"/>
</dbReference>
<dbReference type="InterPro" id="IPR022664">
    <property type="entry name" value="DapB_N_CS"/>
</dbReference>
<dbReference type="InterPro" id="IPR023940">
    <property type="entry name" value="DHDPR_bac"/>
</dbReference>
<dbReference type="InterPro" id="IPR036291">
    <property type="entry name" value="NAD(P)-bd_dom_sf"/>
</dbReference>
<dbReference type="NCBIfam" id="TIGR00036">
    <property type="entry name" value="dapB"/>
    <property type="match status" value="1"/>
</dbReference>
<dbReference type="PANTHER" id="PTHR20836:SF0">
    <property type="entry name" value="4-HYDROXY-TETRAHYDRODIPICOLINATE REDUCTASE 1, CHLOROPLASTIC-RELATED"/>
    <property type="match status" value="1"/>
</dbReference>
<dbReference type="PANTHER" id="PTHR20836">
    <property type="entry name" value="DIHYDRODIPICOLINATE REDUCTASE"/>
    <property type="match status" value="1"/>
</dbReference>
<dbReference type="Pfam" id="PF05173">
    <property type="entry name" value="DapB_C"/>
    <property type="match status" value="1"/>
</dbReference>
<dbReference type="Pfam" id="PF01113">
    <property type="entry name" value="DapB_N"/>
    <property type="match status" value="1"/>
</dbReference>
<dbReference type="PIRSF" id="PIRSF000161">
    <property type="entry name" value="DHPR"/>
    <property type="match status" value="1"/>
</dbReference>
<dbReference type="SUPFAM" id="SSF55347">
    <property type="entry name" value="Glyceraldehyde-3-phosphate dehydrogenase-like, C-terminal domain"/>
    <property type="match status" value="1"/>
</dbReference>
<dbReference type="SUPFAM" id="SSF51735">
    <property type="entry name" value="NAD(P)-binding Rossmann-fold domains"/>
    <property type="match status" value="1"/>
</dbReference>
<dbReference type="PROSITE" id="PS01298">
    <property type="entry name" value="DAPB"/>
    <property type="match status" value="1"/>
</dbReference>
<evidence type="ECO:0000255" key="1">
    <source>
        <dbReference type="HAMAP-Rule" id="MF_00102"/>
    </source>
</evidence>
<evidence type="ECO:0000305" key="2"/>
<accession>Q7N8W3</accession>
<gene>
    <name evidence="1" type="primary">dapB</name>
    <name type="ordered locus">plu0602</name>
</gene>
<reference key="1">
    <citation type="journal article" date="2003" name="Nat. Biotechnol.">
        <title>The genome sequence of the entomopathogenic bacterium Photorhabdus luminescens.</title>
        <authorList>
            <person name="Duchaud E."/>
            <person name="Rusniok C."/>
            <person name="Frangeul L."/>
            <person name="Buchrieser C."/>
            <person name="Givaudan A."/>
            <person name="Taourit S."/>
            <person name="Bocs S."/>
            <person name="Boursaux-Eude C."/>
            <person name="Chandler M."/>
            <person name="Charles J.-F."/>
            <person name="Dassa E."/>
            <person name="Derose R."/>
            <person name="Derzelle S."/>
            <person name="Freyssinet G."/>
            <person name="Gaudriault S."/>
            <person name="Medigue C."/>
            <person name="Lanois A."/>
            <person name="Powell K."/>
            <person name="Siguier P."/>
            <person name="Vincent R."/>
            <person name="Wingate V."/>
            <person name="Zouine M."/>
            <person name="Glaser P."/>
            <person name="Boemare N."/>
            <person name="Danchin A."/>
            <person name="Kunst F."/>
        </authorList>
    </citation>
    <scope>NUCLEOTIDE SEQUENCE [LARGE SCALE GENOMIC DNA]</scope>
    <source>
        <strain>DSM 15139 / CIP 105565 / TT01</strain>
    </source>
</reference>